<comment type="function">
    <text evidence="4 5 6 9">G protein-coupled receptor that is activated by a major product of dietary fiber digestion, the short chain fatty acids (SCFAs), and that plays a role in the regulation of whole-body energy homeostasis and in intestinal immunity. In omnivorous mammals, the short chain fatty acids acetate, propionate and butyrate are produced primarily by the gut microbiome that metabolizes dietary fibers. SCFAs serve as a source of energy but also act as signaling molecules. That G protein-coupled receptor is probably coupled to the pertussis toxin-sensitive, G(i/o)-alpha family of G proteins. Its activation results in the formation of inositol 1,4,5-trisphosphate, the mobilization of intracellular calcium, the phosphorylation of the MAPK3/ERK1 and MAPK1/ERK2 kinases and the inhibition of intracellular cAMP accumulation (PubMed:12711604). Activated by SCFAs and by beta-hydroxybutyrate, a ketone body produced by the liver upon starvation, it inhibits N-type calcium channels and modulates the activity of sympathetic neurons through a signaling cascade involving the beta and gamma subunits of its coupled G protein, phospholipase C and MAP kinases. Thereby, it may regulate energy expenditure through the control of the sympathetic nervous system that controls for instance heart rate. Upon activation by SCFAs accumulating in the intestine, it may also signal to the brain via neural circuits which in turn would regulate intestinal gluconeogenesis. May also control the production of hormones involved in whole-body energy homeostasis. May for instance, regulate blood pressure through renin secretion. May also regulate secretion of the PYY peptide by enteroendocrine cells and control gut motility, intestinal transit rate, and the harvesting of energy from SCFAs produced by gut microbiota. May also indirectly regulate the production of LEP/Leptin, a hormone acting on the CNS to inhibit food intake, in response to the presence of short-chain fatty acids in the intestine. Finally, may also play a role in glucose homeostasis. Besides its role in energy homeostasis, may play a role in intestinal immunity. May mediate the activation of the inflammatory and immune response by SCFAs in the gut, regulating the rapid production of chemokines and cytokines by intestinal epithelial cells. Among SCFAs, the fatty acids containing less than 6 carbons, the most potent activators are probably propionate, butyrate and pentanoate while acetate is a poor activator (PubMed:12496283, PubMed:12711604).</text>
</comment>
<comment type="interaction">
    <interactant intactId="EBI-17762181">
        <id>O14843</id>
    </interactant>
    <interactant intactId="EBI-7797864">
        <id>P11912</id>
        <label>CD79A</label>
    </interactant>
    <organismsDiffer>false</organismsDiffer>
    <experiments>3</experiments>
</comment>
<comment type="interaction">
    <interactant intactId="EBI-17762181">
        <id>O14843</id>
    </interactant>
    <interactant intactId="EBI-372265">
        <id>P21964</id>
        <label>COMT</label>
    </interactant>
    <organismsDiffer>false</organismsDiffer>
    <experiments>3</experiments>
</comment>
<comment type="interaction">
    <interactant intactId="EBI-17762181">
        <id>O14843</id>
    </interactant>
    <interactant intactId="EBI-12019274">
        <id>Q4LDR2</id>
        <label>CTXN3</label>
    </interactant>
    <organismsDiffer>false</organismsDiffer>
    <experiments>3</experiments>
</comment>
<comment type="interaction">
    <interactant intactId="EBI-17762181">
        <id>O14843</id>
    </interactant>
    <interactant intactId="EBI-1753674">
        <id>P52803</id>
        <label>EFNA5</label>
    </interactant>
    <organismsDiffer>false</organismsDiffer>
    <experiments>3</experiments>
</comment>
<comment type="interaction">
    <interactant intactId="EBI-17762181">
        <id>O14843</id>
    </interactant>
    <interactant intactId="EBI-751501">
        <id>Q9Y2W7</id>
        <label>KCNIP3</label>
    </interactant>
    <organismsDiffer>false</organismsDiffer>
    <experiments>3</experiments>
</comment>
<comment type="interaction">
    <interactant intactId="EBI-17762181">
        <id>O14843</id>
    </interactant>
    <interactant intactId="EBI-8070286">
        <id>O43561-2</id>
        <label>LAT</label>
    </interactant>
    <organismsDiffer>false</organismsDiffer>
    <experiments>3</experiments>
</comment>
<comment type="interaction">
    <interactant intactId="EBI-17762181">
        <id>O14843</id>
    </interactant>
    <interactant intactId="EBI-12241118">
        <id>Q16873</id>
        <label>LTC4S</label>
    </interactant>
    <organismsDiffer>false</organismsDiffer>
    <experiments>3</experiments>
</comment>
<comment type="interaction">
    <interactant intactId="EBI-17762181">
        <id>O14843</id>
    </interactant>
    <interactant intactId="EBI-2683145">
        <id>Q9NRX5</id>
        <label>SERINC1</label>
    </interactant>
    <organismsDiffer>false</organismsDiffer>
    <experiments>3</experiments>
</comment>
<comment type="interaction">
    <interactant intactId="EBI-17762181">
        <id>O14843</id>
    </interactant>
    <interactant intactId="EBI-12266234">
        <id>Q8IVJ1</id>
        <label>SLC41A1</label>
    </interactant>
    <organismsDiffer>false</organismsDiffer>
    <experiments>3</experiments>
</comment>
<comment type="interaction">
    <interactant intactId="EBI-17762181">
        <id>O14843</id>
    </interactant>
    <interactant intactId="EBI-10329860">
        <id>Q9Y6I9</id>
        <label>TEX264</label>
    </interactant>
    <organismsDiffer>false</organismsDiffer>
    <experiments>3</experiments>
</comment>
<comment type="interaction">
    <interactant intactId="EBI-17762181">
        <id>O14843</id>
    </interactant>
    <interactant intactId="EBI-10826510">
        <id>Q96B49</id>
        <label>TOMM6</label>
    </interactant>
    <organismsDiffer>false</organismsDiffer>
    <experiments>3</experiments>
</comment>
<comment type="interaction">
    <interactant intactId="EBI-17762181">
        <id>O14843</id>
    </interactant>
    <interactant intactId="EBI-16746122">
        <id>Q9NSU2-1</id>
        <label>TREX1</label>
    </interactant>
    <organismsDiffer>false</organismsDiffer>
    <experiments>3</experiments>
</comment>
<comment type="interaction">
    <interactant intactId="EBI-17762181">
        <id>O14843</id>
    </interactant>
    <interactant intactId="EBI-4401271">
        <id>Q9H1C4</id>
        <label>UNC93B1</label>
    </interactant>
    <organismsDiffer>false</organismsDiffer>
    <experiments>3</experiments>
</comment>
<comment type="interaction">
    <interactant intactId="EBI-17762181">
        <id>O14843</id>
    </interactant>
    <interactant intactId="EBI-7850136">
        <id>Q9Y548</id>
        <label>YIPF1</label>
    </interactant>
    <organismsDiffer>false</organismsDiffer>
    <experiments>3</experiments>
</comment>
<comment type="subcellular location">
    <subcellularLocation>
        <location evidence="6">Cell membrane</location>
        <topology evidence="6">Multi-pass membrane protein</topology>
    </subcellularLocation>
</comment>
<comment type="tissue specificity">
    <text evidence="4 8">Highest level in adipose tissue, and lower expression across all tissues tested. Expressed in sympathetic ganglia.</text>
</comment>
<comment type="polymorphism">
    <text evidence="7">The 6 amino acid differences at positions 44, 45, 174, 227, 256 and 346 between GPR42 and FFAR3, are polymorphic in the human population. The frequency of the probable inactive allele of FFAR3, with a Trp at position 174 was estimated to 1%.</text>
</comment>
<comment type="similarity">
    <text evidence="2">Belongs to the G-protein coupled receptor 1 family.</text>
</comment>
<gene>
    <name type="primary">FFAR3</name>
    <name type="synonym">GPR41</name>
</gene>
<organism>
    <name type="scientific">Homo sapiens</name>
    <name type="common">Human</name>
    <dbReference type="NCBI Taxonomy" id="9606"/>
    <lineage>
        <taxon>Eukaryota</taxon>
        <taxon>Metazoa</taxon>
        <taxon>Chordata</taxon>
        <taxon>Craniata</taxon>
        <taxon>Vertebrata</taxon>
        <taxon>Euteleostomi</taxon>
        <taxon>Mammalia</taxon>
        <taxon>Eutheria</taxon>
        <taxon>Euarchontoglires</taxon>
        <taxon>Primates</taxon>
        <taxon>Haplorrhini</taxon>
        <taxon>Catarrhini</taxon>
        <taxon>Hominidae</taxon>
        <taxon>Homo</taxon>
    </lineage>
</organism>
<reference key="1">
    <citation type="journal article" date="1997" name="Biochem. Biophys. Res. Commun.">
        <title>A cluster of four novel human G protein-coupled receptor genes occurring in close proximity to CD22 gene on chromosome 19q13.1.</title>
        <authorList>
            <person name="Sawzdargo M."/>
            <person name="George S.R."/>
            <person name="Nguyen T."/>
            <person name="Xu S."/>
            <person name="Kolakowski L.F. Jr."/>
            <person name="O'Dowd B.F."/>
        </authorList>
    </citation>
    <scope>NUCLEOTIDE SEQUENCE [GENOMIC DNA]</scope>
</reference>
<reference key="2">
    <citation type="journal article" date="2004" name="Nature">
        <title>The DNA sequence and biology of human chromosome 19.</title>
        <authorList>
            <person name="Grimwood J."/>
            <person name="Gordon L.A."/>
            <person name="Olsen A.S."/>
            <person name="Terry A."/>
            <person name="Schmutz J."/>
            <person name="Lamerdin J.E."/>
            <person name="Hellsten U."/>
            <person name="Goodstein D."/>
            <person name="Couronne O."/>
            <person name="Tran-Gyamfi M."/>
            <person name="Aerts A."/>
            <person name="Altherr M."/>
            <person name="Ashworth L."/>
            <person name="Bajorek E."/>
            <person name="Black S."/>
            <person name="Branscomb E."/>
            <person name="Caenepeel S."/>
            <person name="Carrano A.V."/>
            <person name="Caoile C."/>
            <person name="Chan Y.M."/>
            <person name="Christensen M."/>
            <person name="Cleland C.A."/>
            <person name="Copeland A."/>
            <person name="Dalin E."/>
            <person name="Dehal P."/>
            <person name="Denys M."/>
            <person name="Detter J.C."/>
            <person name="Escobar J."/>
            <person name="Flowers D."/>
            <person name="Fotopulos D."/>
            <person name="Garcia C."/>
            <person name="Georgescu A.M."/>
            <person name="Glavina T."/>
            <person name="Gomez M."/>
            <person name="Gonzales E."/>
            <person name="Groza M."/>
            <person name="Hammon N."/>
            <person name="Hawkins T."/>
            <person name="Haydu L."/>
            <person name="Ho I."/>
            <person name="Huang W."/>
            <person name="Israni S."/>
            <person name="Jett J."/>
            <person name="Kadner K."/>
            <person name="Kimball H."/>
            <person name="Kobayashi A."/>
            <person name="Larionov V."/>
            <person name="Leem S.-H."/>
            <person name="Lopez F."/>
            <person name="Lou Y."/>
            <person name="Lowry S."/>
            <person name="Malfatti S."/>
            <person name="Martinez D."/>
            <person name="McCready P.M."/>
            <person name="Medina C."/>
            <person name="Morgan J."/>
            <person name="Nelson K."/>
            <person name="Nolan M."/>
            <person name="Ovcharenko I."/>
            <person name="Pitluck S."/>
            <person name="Pollard M."/>
            <person name="Popkie A.P."/>
            <person name="Predki P."/>
            <person name="Quan G."/>
            <person name="Ramirez L."/>
            <person name="Rash S."/>
            <person name="Retterer J."/>
            <person name="Rodriguez A."/>
            <person name="Rogers S."/>
            <person name="Salamov A."/>
            <person name="Salazar A."/>
            <person name="She X."/>
            <person name="Smith D."/>
            <person name="Slezak T."/>
            <person name="Solovyev V."/>
            <person name="Thayer N."/>
            <person name="Tice H."/>
            <person name="Tsai M."/>
            <person name="Ustaszewska A."/>
            <person name="Vo N."/>
            <person name="Wagner M."/>
            <person name="Wheeler J."/>
            <person name="Wu K."/>
            <person name="Xie G."/>
            <person name="Yang J."/>
            <person name="Dubchak I."/>
            <person name="Furey T.S."/>
            <person name="DeJong P."/>
            <person name="Dickson M."/>
            <person name="Gordon D."/>
            <person name="Eichler E.E."/>
            <person name="Pennacchio L.A."/>
            <person name="Richardson P."/>
            <person name="Stubbs L."/>
            <person name="Rokhsar D.S."/>
            <person name="Myers R.M."/>
            <person name="Rubin E.M."/>
            <person name="Lucas S.M."/>
        </authorList>
    </citation>
    <scope>NUCLEOTIDE SEQUENCE [LARGE SCALE GENOMIC DNA]</scope>
</reference>
<reference key="3">
    <citation type="journal article" date="2004" name="Genome Res.">
        <title>The status, quality, and expansion of the NIH full-length cDNA project: the Mammalian Gene Collection (MGC).</title>
        <authorList>
            <consortium name="The MGC Project Team"/>
        </authorList>
    </citation>
    <scope>NUCLEOTIDE SEQUENCE [LARGE SCALE MRNA]</scope>
    <source>
        <tissue>Brain</tissue>
        <tissue>Ovary</tissue>
    </source>
</reference>
<reference key="4">
    <citation type="journal article" date="2003" name="J. Biol. Chem.">
        <title>The orphan G protein-coupled receptors GPR41 and GPR43 are activated by propionate and other short chain carboxylic acids.</title>
        <authorList>
            <person name="Brown A.J."/>
            <person name="Goldsworthy S.M."/>
            <person name="Barnes A.A."/>
            <person name="Eilert M.M."/>
            <person name="Tcheang L."/>
            <person name="Daniels D."/>
            <person name="Muir A.I."/>
            <person name="Wigglesworth M.J."/>
            <person name="Kinghorn I."/>
            <person name="Fraser N.J."/>
            <person name="Pike N.B."/>
            <person name="Strum J.C."/>
            <person name="Steplewski K.M."/>
            <person name="Murdock P.R."/>
            <person name="Holder J.C."/>
            <person name="Marshall F.H."/>
            <person name="Szekeres P.G."/>
            <person name="Wilson S."/>
            <person name="Ignar D.M."/>
            <person name="Foord S.M."/>
            <person name="Wise A."/>
            <person name="Dowell S.J."/>
        </authorList>
    </citation>
    <scope>FUNCTION</scope>
    <scope>CHARACTERIZATION OF VARIANT TRP-174</scope>
    <scope>TISSUE SPECIFICITY</scope>
</reference>
<reference key="5">
    <citation type="journal article" date="2003" name="J. Biol. Chem.">
        <title>Functional characterization of human receptors for short chain fatty acids and their role in polymorphonuclear cell activation.</title>
        <authorList>
            <person name="Le Poul E."/>
            <person name="Loison C."/>
            <person name="Struyf S."/>
            <person name="Springael J.Y."/>
            <person name="Lannoy V."/>
            <person name="Decobecq M.E."/>
            <person name="Brezillon S."/>
            <person name="Dupriez V."/>
            <person name="Vassart G."/>
            <person name="Van Damme J."/>
            <person name="Parmentier M."/>
            <person name="Detheux M."/>
        </authorList>
    </citation>
    <scope>FUNCTION</scope>
    <scope>CHARACTERIZATION</scope>
</reference>
<reference key="6">
    <citation type="journal article" date="2008" name="J. Biol. Chem.">
        <title>Conserved polar residues in transmembrane domains V, VI, and VII of free fatty acid receptor 2 and free fatty acid receptor 3 are required for the binding and function of short chain fatty acids.</title>
        <authorList>
            <person name="Stoddart L.A."/>
            <person name="Smith N.J."/>
            <person name="Jenkins L."/>
            <person name="Brown A.J."/>
            <person name="Milligan G."/>
        </authorList>
    </citation>
    <scope>FUNCTION</scope>
    <scope>SUBCELLULAR LOCATION</scope>
    <scope>MUTAGENESIS OF HIS-146; ARG-185; HIS-245 AND ARG-258</scope>
</reference>
<reference key="7">
    <citation type="journal article" date="2009" name="DNA Cell Biol.">
        <title>Sequence polymorphisms provide a common consensus sequence for GPR41 and GPR42.</title>
        <authorList>
            <person name="Liaw C.W."/>
            <person name="Connolly D.T."/>
        </authorList>
    </citation>
    <scope>POLYMORPHISM</scope>
    <scope>VARIANTS ARG-44; CYS-45; TRP-174; VAL-227; VAL-256 AND ASN-346</scope>
</reference>
<reference key="8">
    <citation type="journal article" date="2011" name="Proc. Natl. Acad. Sci. U.S.A.">
        <title>Short-chain fatty acids and ketones directly regulate sympathetic nervous system via G protein-coupled receptor 41 (GPR41).</title>
        <authorList>
            <person name="Kimura I."/>
            <person name="Inoue D."/>
            <person name="Maeda T."/>
            <person name="Hara T."/>
            <person name="Ichimura A."/>
            <person name="Miyauchi S."/>
            <person name="Kobayashi M."/>
            <person name="Hirasawa A."/>
            <person name="Tsujimoto G."/>
        </authorList>
    </citation>
    <scope>TISSUE SPECIFICITY</scope>
</reference>
<reference key="9">
    <citation type="journal article" date="2012" name="J. Biol. Chem.">
        <title>Extracellular ionic locks determine variation in constitutive activity and ligand potency between species orthologs of the free fatty acid receptors FFA2 and FFA3.</title>
        <authorList>
            <person name="Hudson B.D."/>
            <person name="Tikhonova I.G."/>
            <person name="Pandey S.K."/>
            <person name="Ulven T."/>
            <person name="Milligan G."/>
        </authorList>
    </citation>
    <scope>FUNCTION</scope>
    <scope>MUTAGENESIS OF ASP-158</scope>
</reference>
<protein>
    <recommendedName>
        <fullName>Free fatty acid receptor 3</fullName>
    </recommendedName>
    <alternativeName>
        <fullName>G-protein coupled receptor 41</fullName>
    </alternativeName>
</protein>
<accession>O14843</accession>
<accession>B2RWM8</accession>
<accession>Q14CM7</accession>
<evidence type="ECO:0000255" key="1"/>
<evidence type="ECO:0000255" key="2">
    <source>
        <dbReference type="PROSITE-ProRule" id="PRU00521"/>
    </source>
</evidence>
<evidence type="ECO:0000256" key="3">
    <source>
        <dbReference type="SAM" id="MobiDB-lite"/>
    </source>
</evidence>
<evidence type="ECO:0000269" key="4">
    <source>
    </source>
</evidence>
<evidence type="ECO:0000269" key="5">
    <source>
    </source>
</evidence>
<evidence type="ECO:0000269" key="6">
    <source>
    </source>
</evidence>
<evidence type="ECO:0000269" key="7">
    <source>
    </source>
</evidence>
<evidence type="ECO:0000269" key="8">
    <source>
    </source>
</evidence>
<evidence type="ECO:0000269" key="9">
    <source>
    </source>
</evidence>
<evidence type="ECO:0007829" key="10">
    <source>
        <dbReference type="PDB" id="8J20"/>
    </source>
</evidence>
<name>FFAR3_HUMAN</name>
<dbReference type="EMBL" id="AF024688">
    <property type="protein sequence ID" value="AAB86711.1"/>
    <property type="molecule type" value="Genomic_DNA"/>
</dbReference>
<dbReference type="EMBL" id="U62631">
    <property type="status" value="NOT_ANNOTATED_CDS"/>
    <property type="molecule type" value="Genomic_DNA"/>
</dbReference>
<dbReference type="EMBL" id="BC035657">
    <property type="protein sequence ID" value="AAH35657.1"/>
    <property type="molecule type" value="mRNA"/>
</dbReference>
<dbReference type="EMBL" id="BC113695">
    <property type="protein sequence ID" value="AAI13696.1"/>
    <property type="molecule type" value="mRNA"/>
</dbReference>
<dbReference type="EMBL" id="BC148269">
    <property type="protein sequence ID" value="AAI48270.1"/>
    <property type="molecule type" value="mRNA"/>
</dbReference>
<dbReference type="CCDS" id="CCDS12459.1"/>
<dbReference type="PIR" id="JC5715">
    <property type="entry name" value="JC5715"/>
</dbReference>
<dbReference type="RefSeq" id="NP_005295.1">
    <property type="nucleotide sequence ID" value="NM_005304.5"/>
</dbReference>
<dbReference type="PDB" id="8J20">
    <property type="method" value="EM"/>
    <property type="resolution" value="3.20 A"/>
    <property type="chains" value="D=1-314"/>
</dbReference>
<dbReference type="PDB" id="8J21">
    <property type="method" value="EM"/>
    <property type="resolution" value="3.30 A"/>
    <property type="chains" value="D=1-314"/>
</dbReference>
<dbReference type="PDBsum" id="8J20"/>
<dbReference type="PDBsum" id="8J21"/>
<dbReference type="EMDB" id="EMD-35940"/>
<dbReference type="EMDB" id="EMD-35941"/>
<dbReference type="SMR" id="O14843"/>
<dbReference type="BioGRID" id="109123">
    <property type="interactions" value="15"/>
</dbReference>
<dbReference type="FunCoup" id="O14843">
    <property type="interactions" value="678"/>
</dbReference>
<dbReference type="IntAct" id="O14843">
    <property type="interactions" value="14"/>
</dbReference>
<dbReference type="STRING" id="9606.ENSP00000328230"/>
<dbReference type="BindingDB" id="O14843"/>
<dbReference type="ChEMBL" id="CHEMBL5201"/>
<dbReference type="DrugCentral" id="O14843"/>
<dbReference type="GuidetoPHARMACOLOGY" id="227"/>
<dbReference type="SwissLipids" id="SLP:000001557"/>
<dbReference type="TCDB" id="9.A.14.13.48">
    <property type="family name" value="the g-protein-coupled receptor (gpcr) family"/>
</dbReference>
<dbReference type="GlyCosmos" id="O14843">
    <property type="glycosylation" value="1 site, No reported glycans"/>
</dbReference>
<dbReference type="GlyGen" id="O14843">
    <property type="glycosylation" value="1 site"/>
</dbReference>
<dbReference type="BioMuta" id="FFAR3"/>
<dbReference type="PaxDb" id="9606-ENSP00000328230"/>
<dbReference type="PeptideAtlas" id="O14843"/>
<dbReference type="Antibodypedia" id="55509">
    <property type="antibodies" value="184 antibodies from 28 providers"/>
</dbReference>
<dbReference type="DNASU" id="2865"/>
<dbReference type="Ensembl" id="ENST00000327809.5">
    <property type="protein sequence ID" value="ENSP00000328230.3"/>
    <property type="gene ID" value="ENSG00000185897.7"/>
</dbReference>
<dbReference type="Ensembl" id="ENST00000594310.1">
    <property type="protein sequence ID" value="ENSP00000469522.1"/>
    <property type="gene ID" value="ENSG00000185897.7"/>
</dbReference>
<dbReference type="GeneID" id="2865"/>
<dbReference type="KEGG" id="hsa:2865"/>
<dbReference type="MANE-Select" id="ENST00000327809.5">
    <property type="protein sequence ID" value="ENSP00000328230.3"/>
    <property type="RefSeq nucleotide sequence ID" value="NM_005304.5"/>
    <property type="RefSeq protein sequence ID" value="NP_005295.1"/>
</dbReference>
<dbReference type="UCSC" id="uc002nzd.4">
    <property type="organism name" value="human"/>
</dbReference>
<dbReference type="AGR" id="HGNC:4499"/>
<dbReference type="CTD" id="2865"/>
<dbReference type="DisGeNET" id="2865"/>
<dbReference type="GeneCards" id="FFAR3"/>
<dbReference type="HGNC" id="HGNC:4499">
    <property type="gene designation" value="FFAR3"/>
</dbReference>
<dbReference type="HPA" id="ENSG00000185897">
    <property type="expression patterns" value="Tissue enhanced (adipose tissue, lymphoid tissue)"/>
</dbReference>
<dbReference type="MIM" id="603821">
    <property type="type" value="gene"/>
</dbReference>
<dbReference type="neXtProt" id="NX_O14843"/>
<dbReference type="OpenTargets" id="ENSG00000185897"/>
<dbReference type="PharmGKB" id="PA28888"/>
<dbReference type="VEuPathDB" id="HostDB:ENSG00000185897"/>
<dbReference type="eggNOG" id="ENOG502QQGM">
    <property type="taxonomic scope" value="Eukaryota"/>
</dbReference>
<dbReference type="GeneTree" id="ENSGT00990000203527"/>
<dbReference type="HOGENOM" id="CLU_009579_8_4_1"/>
<dbReference type="InParanoid" id="O14843"/>
<dbReference type="OMA" id="HWLYFSV"/>
<dbReference type="OrthoDB" id="5961208at2759"/>
<dbReference type="PAN-GO" id="O14843">
    <property type="GO annotations" value="4 GO annotations based on evolutionary models"/>
</dbReference>
<dbReference type="PhylomeDB" id="O14843"/>
<dbReference type="TreeFam" id="TF350010"/>
<dbReference type="PathwayCommons" id="O14843"/>
<dbReference type="Reactome" id="R-HSA-416476">
    <property type="pathway name" value="G alpha (q) signalling events"/>
</dbReference>
<dbReference type="Reactome" id="R-HSA-444209">
    <property type="pathway name" value="Free fatty acid receptors"/>
</dbReference>
<dbReference type="SignaLink" id="O14843"/>
<dbReference type="SIGNOR" id="O14843"/>
<dbReference type="BioGRID-ORCS" id="2865">
    <property type="hits" value="14 hits in 1044 CRISPR screens"/>
</dbReference>
<dbReference type="GeneWiki" id="Free_fatty_acid_receptor_3"/>
<dbReference type="GenomeRNAi" id="2865"/>
<dbReference type="Pharos" id="O14843">
    <property type="development level" value="Tchem"/>
</dbReference>
<dbReference type="PRO" id="PR:O14843"/>
<dbReference type="Proteomes" id="UP000005640">
    <property type="component" value="Chromosome 19"/>
</dbReference>
<dbReference type="RNAct" id="O14843">
    <property type="molecule type" value="protein"/>
</dbReference>
<dbReference type="Bgee" id="ENSG00000185897">
    <property type="expression patterns" value="Expressed in male germ line stem cell (sensu Vertebrata) in testis and 80 other cell types or tissues"/>
</dbReference>
<dbReference type="ExpressionAtlas" id="O14843">
    <property type="expression patterns" value="baseline and differential"/>
</dbReference>
<dbReference type="GO" id="GO:0005886">
    <property type="term" value="C:plasma membrane"/>
    <property type="evidence" value="ECO:0000314"/>
    <property type="project" value="UniProtKB"/>
</dbReference>
<dbReference type="GO" id="GO:0004930">
    <property type="term" value="F:G protein-coupled receptor activity"/>
    <property type="evidence" value="ECO:0000314"/>
    <property type="project" value="UniProtKB"/>
</dbReference>
<dbReference type="GO" id="GO:0008289">
    <property type="term" value="F:lipid binding"/>
    <property type="evidence" value="ECO:0007669"/>
    <property type="project" value="UniProtKB-KW"/>
</dbReference>
<dbReference type="GO" id="GO:0007193">
    <property type="term" value="P:adenylate cyclase-inhibiting G protein-coupled receptor signaling pathway"/>
    <property type="evidence" value="ECO:0000314"/>
    <property type="project" value="UniProtKB"/>
</dbReference>
<dbReference type="GO" id="GO:0071398">
    <property type="term" value="P:cellular response to fatty acid"/>
    <property type="evidence" value="ECO:0000314"/>
    <property type="project" value="UniProtKB"/>
</dbReference>
<dbReference type="GO" id="GO:0007186">
    <property type="term" value="P:G protein-coupled receptor signaling pathway"/>
    <property type="evidence" value="ECO:0000314"/>
    <property type="project" value="UniProtKB"/>
</dbReference>
<dbReference type="GO" id="GO:0006954">
    <property type="term" value="P:inflammatory response"/>
    <property type="evidence" value="ECO:0007669"/>
    <property type="project" value="UniProtKB-KW"/>
</dbReference>
<dbReference type="GO" id="GO:0002385">
    <property type="term" value="P:mucosal immune response"/>
    <property type="evidence" value="ECO:0000250"/>
    <property type="project" value="UniProtKB"/>
</dbReference>
<dbReference type="GO" id="GO:0045776">
    <property type="term" value="P:negative regulation of blood pressure"/>
    <property type="evidence" value="ECO:0000250"/>
    <property type="project" value="UniProtKB"/>
</dbReference>
<dbReference type="GO" id="GO:0002879">
    <property type="term" value="P:positive regulation of acute inflammatory response to non-antigenic stimulus"/>
    <property type="evidence" value="ECO:0000250"/>
    <property type="project" value="UniProtKB"/>
</dbReference>
<dbReference type="GO" id="GO:0032722">
    <property type="term" value="P:positive regulation of chemokine production"/>
    <property type="evidence" value="ECO:0000250"/>
    <property type="project" value="UniProtKB"/>
</dbReference>
<dbReference type="GO" id="GO:0002720">
    <property type="term" value="P:positive regulation of cytokine production involved in immune response"/>
    <property type="evidence" value="ECO:0000250"/>
    <property type="project" value="UniProtKB"/>
</dbReference>
<dbReference type="GO" id="GO:0046885">
    <property type="term" value="P:regulation of hormone biosynthetic process"/>
    <property type="evidence" value="ECO:0000250"/>
    <property type="project" value="UniProtKB"/>
</dbReference>
<dbReference type="GO" id="GO:0046626">
    <property type="term" value="P:regulation of insulin receptor signaling pathway"/>
    <property type="evidence" value="ECO:0000250"/>
    <property type="project" value="UniProtKB"/>
</dbReference>
<dbReference type="GO" id="GO:0014061">
    <property type="term" value="P:regulation of norepinephrine secretion"/>
    <property type="evidence" value="ECO:0000250"/>
    <property type="project" value="UniProtKB"/>
</dbReference>
<dbReference type="GO" id="GO:0090276">
    <property type="term" value="P:regulation of peptide hormone secretion"/>
    <property type="evidence" value="ECO:0000250"/>
    <property type="project" value="UniProtKB"/>
</dbReference>
<dbReference type="CDD" id="cd15170">
    <property type="entry name" value="7tmA_FFAR2_FFAR3"/>
    <property type="match status" value="1"/>
</dbReference>
<dbReference type="FunFam" id="1.20.1070.10:FF:000173">
    <property type="entry name" value="Free fatty acid receptor 1"/>
    <property type="match status" value="1"/>
</dbReference>
<dbReference type="Gene3D" id="1.20.1070.10">
    <property type="entry name" value="Rhodopsin 7-helix transmembrane proteins"/>
    <property type="match status" value="1"/>
</dbReference>
<dbReference type="InterPro" id="IPR000276">
    <property type="entry name" value="GPCR_Rhodpsn"/>
</dbReference>
<dbReference type="InterPro" id="IPR017452">
    <property type="entry name" value="GPCR_Rhodpsn_7TM"/>
</dbReference>
<dbReference type="InterPro" id="IPR013312">
    <property type="entry name" value="GPR40-rel_orph"/>
</dbReference>
<dbReference type="PANTHER" id="PTHR45822">
    <property type="entry name" value="FREE FATTY ACID RECEPTOR 2-RELATED"/>
    <property type="match status" value="1"/>
</dbReference>
<dbReference type="PANTHER" id="PTHR45822:SF6">
    <property type="entry name" value="FREE FATTY ACID RECEPTOR 3-RELATED"/>
    <property type="match status" value="1"/>
</dbReference>
<dbReference type="Pfam" id="PF00001">
    <property type="entry name" value="7tm_1"/>
    <property type="match status" value="1"/>
</dbReference>
<dbReference type="PRINTS" id="PR00237">
    <property type="entry name" value="GPCRRHODOPSN"/>
</dbReference>
<dbReference type="PRINTS" id="PR01904">
    <property type="entry name" value="GPR40FAMILY"/>
</dbReference>
<dbReference type="SUPFAM" id="SSF81321">
    <property type="entry name" value="Family A G protein-coupled receptor-like"/>
    <property type="match status" value="1"/>
</dbReference>
<dbReference type="PROSITE" id="PS00237">
    <property type="entry name" value="G_PROTEIN_RECEP_F1_1"/>
    <property type="match status" value="1"/>
</dbReference>
<dbReference type="PROSITE" id="PS50262">
    <property type="entry name" value="G_PROTEIN_RECEP_F1_2"/>
    <property type="match status" value="1"/>
</dbReference>
<keyword id="KW-0002">3D-structure</keyword>
<keyword id="KW-1003">Cell membrane</keyword>
<keyword id="KW-1015">Disulfide bond</keyword>
<keyword id="KW-0297">G-protein coupled receptor</keyword>
<keyword id="KW-0325">Glycoprotein</keyword>
<keyword id="KW-0391">Immunity</keyword>
<keyword id="KW-0395">Inflammatory response</keyword>
<keyword id="KW-0446">Lipid-binding</keyword>
<keyword id="KW-0472">Membrane</keyword>
<keyword id="KW-0675">Receptor</keyword>
<keyword id="KW-1185">Reference proteome</keyword>
<keyword id="KW-0807">Transducer</keyword>
<keyword id="KW-0812">Transmembrane</keyword>
<keyword id="KW-1133">Transmembrane helix</keyword>
<feature type="chain" id="PRO_0000069569" description="Free fatty acid receptor 3">
    <location>
        <begin position="1"/>
        <end position="346"/>
    </location>
</feature>
<feature type="topological domain" description="Extracellular" evidence="1">
    <location>
        <begin position="1"/>
        <end position="19"/>
    </location>
</feature>
<feature type="transmembrane region" description="Helical; Name=1" evidence="1">
    <location>
        <begin position="20"/>
        <end position="40"/>
    </location>
</feature>
<feature type="topological domain" description="Cytoplasmic">
    <location>
        <begin position="41"/>
        <end position="47"/>
    </location>
</feature>
<feature type="transmembrane region" description="Helical; Name=2" evidence="1">
    <location>
        <begin position="48"/>
        <end position="68"/>
    </location>
</feature>
<feature type="topological domain" description="Extracellular" evidence="1">
    <location>
        <begin position="69"/>
        <end position="88"/>
    </location>
</feature>
<feature type="transmembrane region" description="Helical; Name=3" evidence="1">
    <location>
        <begin position="89"/>
        <end position="111"/>
    </location>
</feature>
<feature type="topological domain" description="Cytoplasmic" evidence="1">
    <location>
        <begin position="112"/>
        <end position="132"/>
    </location>
</feature>
<feature type="transmembrane region" description="Helical; Name=4" evidence="1">
    <location>
        <begin position="133"/>
        <end position="153"/>
    </location>
</feature>
<feature type="topological domain" description="Extracellular" evidence="1">
    <location>
        <begin position="154"/>
        <end position="178"/>
    </location>
</feature>
<feature type="transmembrane region" description="Helical; Name=5" evidence="1">
    <location>
        <begin position="179"/>
        <end position="199"/>
    </location>
</feature>
<feature type="topological domain" description="Cytoplasmic" evidence="1">
    <location>
        <begin position="200"/>
        <end position="222"/>
    </location>
</feature>
<feature type="transmembrane region" description="Helical; Name=6" evidence="1">
    <location>
        <begin position="223"/>
        <end position="243"/>
    </location>
</feature>
<feature type="topological domain" description="Extracellular" evidence="1">
    <location>
        <begin position="244"/>
        <end position="258"/>
    </location>
</feature>
<feature type="transmembrane region" description="Helical; Name=7" evidence="1">
    <location>
        <begin position="259"/>
        <end position="279"/>
    </location>
</feature>
<feature type="topological domain" description="Cytoplasmic" evidence="1">
    <location>
        <begin position="280"/>
        <end position="346"/>
    </location>
</feature>
<feature type="region of interest" description="Disordered" evidence="3">
    <location>
        <begin position="307"/>
        <end position="346"/>
    </location>
</feature>
<feature type="compositionally biased region" description="Basic and acidic residues" evidence="3">
    <location>
        <begin position="307"/>
        <end position="330"/>
    </location>
</feature>
<feature type="glycosylation site" description="N-linked (GlcNAc...) asparagine" evidence="1">
    <location>
        <position position="166"/>
    </location>
</feature>
<feature type="disulfide bond" evidence="2">
    <location>
        <begin position="88"/>
        <end position="169"/>
    </location>
</feature>
<feature type="sequence variant" id="VAR_062854" description="In dbSNP:rs382771." evidence="7">
    <original>Q</original>
    <variation>R</variation>
    <location>
        <position position="44"/>
    </location>
</feature>
<feature type="sequence variant" id="VAR_062855" description="In dbSNP:rs1359000742." evidence="7">
    <original>R</original>
    <variation>C</variation>
    <location>
        <position position="45"/>
    </location>
</feature>
<feature type="sequence variant" id="VAR_062856" description="Abolishes activation by propionate; dbSNP:rs1415955990." evidence="4 7">
    <original>R</original>
    <variation>W</variation>
    <location>
        <position position="174"/>
    </location>
</feature>
<feature type="sequence variant" id="VAR_062857" description="In dbSNP:rs1395869674." evidence="7">
    <original>L</original>
    <variation>V</variation>
    <location>
        <position position="227"/>
    </location>
</feature>
<feature type="sequence variant" id="VAR_062858" description="In dbSNP:rs1170582382." evidence="7">
    <original>A</original>
    <variation>V</variation>
    <location>
        <position position="256"/>
    </location>
</feature>
<feature type="sequence variant" id="VAR_062962" description="In dbSNP:rs201080710." evidence="7">
    <original>S</original>
    <variation>N</variation>
    <location>
        <position position="346"/>
    </location>
</feature>
<feature type="mutagenesis site" description="Partial loss of SCFA-induced G protein-coupled receptor activity." evidence="6">
    <original>H</original>
    <variation>A</variation>
    <location>
        <position position="146"/>
    </location>
</feature>
<feature type="mutagenesis site" description="Gain of SCFA-independent constitutive G protein-coupled receptor activity." evidence="9">
    <original>D</original>
    <variation>N</variation>
    <location>
        <position position="158"/>
    </location>
</feature>
<feature type="mutagenesis site" description="Loss of SCFA-induced G protein-coupled receptor activity." evidence="6">
    <original>R</original>
    <variation>A</variation>
    <location>
        <position position="185"/>
    </location>
</feature>
<feature type="mutagenesis site" description="Loss of SCFA-induced G protein-coupled receptor activity." evidence="6">
    <original>H</original>
    <variation>A</variation>
    <location>
        <position position="245"/>
    </location>
</feature>
<feature type="mutagenesis site" description="Loss of SCFA-induced G protein-coupled receptor activity." evidence="6">
    <original>R</original>
    <variation>A</variation>
    <location>
        <position position="258"/>
    </location>
</feature>
<feature type="helix" evidence="10">
    <location>
        <begin position="14"/>
        <end position="45"/>
    </location>
</feature>
<feature type="helix" evidence="10">
    <location>
        <begin position="49"/>
        <end position="72"/>
    </location>
</feature>
<feature type="turn" evidence="10">
    <location>
        <begin position="73"/>
        <end position="78"/>
    </location>
</feature>
<feature type="turn" evidence="10">
    <location>
        <begin position="85"/>
        <end position="87"/>
    </location>
</feature>
<feature type="helix" evidence="10">
    <location>
        <begin position="88"/>
        <end position="118"/>
    </location>
</feature>
<feature type="helix" evidence="10">
    <location>
        <begin position="120"/>
        <end position="125"/>
    </location>
</feature>
<feature type="helix" evidence="10">
    <location>
        <begin position="129"/>
        <end position="154"/>
    </location>
</feature>
<feature type="strand" evidence="10">
    <location>
        <begin position="169"/>
        <end position="172"/>
    </location>
</feature>
<feature type="helix" evidence="10">
    <location>
        <begin position="178"/>
        <end position="210"/>
    </location>
</feature>
<feature type="helix" evidence="10">
    <location>
        <begin position="217"/>
        <end position="251"/>
    </location>
</feature>
<feature type="helix" evidence="10">
    <location>
        <begin position="258"/>
        <end position="279"/>
    </location>
</feature>
<feature type="helix" evidence="10">
    <location>
        <begin position="281"/>
        <end position="290"/>
    </location>
</feature>
<proteinExistence type="evidence at protein level"/>
<sequence>MDTGPDQSYFSGNHWFVFSVYLLTFLVGLPLNLLALVVFVGKLQRRPVAVDVLLLNLTASDLLLLLFLPFRMVEAANGMHWPLPFILCPLSGFIFFTTIYLTALFLAAVSIERFLSVAHPLWYKTRPRLGQAGLVSVACWLLASAHCSVVYVIEFSGDISHSQGTNGTCYLEFRKDQLAILLPVRLEMAVVLFVVPLIITSYCYSRLVWILGRGGSHRRQRRVAGLLAATLLNFLVCFGPYNVSHVVGYICGESPAWRIYVTLLSTLNSCVDPFVYYFSSSGFQADFHELLRRLCGLWGQWQQESSMELKEQKGGEEQRADRPAERKTSEHSQGCGTGGQVACAES</sequence>